<proteinExistence type="predicted"/>
<accession>Q52784</accession>
<dbReference type="EMBL" id="U23471">
    <property type="protein sequence ID" value="AAA80298.1"/>
    <property type="molecule type" value="Genomic_DNA"/>
</dbReference>
<dbReference type="SMR" id="Q52784"/>
<dbReference type="STRING" id="29449.NXC12_CH00403"/>
<dbReference type="Gene3D" id="2.60.450.10">
    <property type="entry name" value="Lipopolysaccharide (LPS) transport protein A like domain"/>
    <property type="match status" value="1"/>
</dbReference>
<evidence type="ECO:0000305" key="1"/>
<feature type="chain" id="PRO_0000160651" description="Uncharacterized protein in rpoN-linked probable transport protein 5'region">
    <location>
        <begin position="1" status="less than"/>
        <end position="54"/>
    </location>
</feature>
<feature type="non-terminal residue">
    <location>
        <position position="1"/>
    </location>
</feature>
<protein>
    <recommendedName>
        <fullName>Uncharacterized protein in rpoN-linked probable transport protein 5'region</fullName>
    </recommendedName>
</protein>
<name>YNTX_RHIET</name>
<reference key="1">
    <citation type="submission" date="1995-03" db="EMBL/GenBank/DDBJ databases">
        <title>Complementation analysis and sequence of the rpoN gene from Rhizobium leguminosarum biovar phaseoli.</title>
        <authorList>
            <person name="Michiels J."/>
            <person name="Van Soom T."/>
            <person name="de Wilde P."/>
            <person name="Vanderleyden J."/>
        </authorList>
    </citation>
    <scope>NUCLEOTIDE SEQUENCE [GENOMIC DNA]</scope>
    <source>
        <strain>CNPAF512</strain>
    </source>
</reference>
<comment type="caution">
    <text evidence="1">Strain CNPAF512 was originally thought to originate from R.leguminosarum bv phaseoli.</text>
</comment>
<organism>
    <name type="scientific">Rhizobium etli</name>
    <dbReference type="NCBI Taxonomy" id="29449"/>
    <lineage>
        <taxon>Bacteria</taxon>
        <taxon>Pseudomonadati</taxon>
        <taxon>Pseudomonadota</taxon>
        <taxon>Alphaproteobacteria</taxon>
        <taxon>Hyphomicrobiales</taxon>
        <taxon>Rhizobiaceae</taxon>
        <taxon>Rhizobium/Agrobacterium group</taxon>
        <taxon>Rhizobium</taxon>
    </lineage>
</organism>
<sequence>GNKVILSDGPNVFTGCKLTVHMQTGQAELESCGGRVQIQLDPKSQPNAQQQKQN</sequence>